<dbReference type="EC" id="4.1.99.23" evidence="1"/>
<dbReference type="EMBL" id="CP000148">
    <property type="protein sequence ID" value="ABB30714.1"/>
    <property type="molecule type" value="Genomic_DNA"/>
</dbReference>
<dbReference type="SMR" id="Q39YG0"/>
<dbReference type="STRING" id="269799.Gmet_0471"/>
<dbReference type="KEGG" id="gme:Gmet_0471"/>
<dbReference type="eggNOG" id="COG0422">
    <property type="taxonomic scope" value="Bacteria"/>
</dbReference>
<dbReference type="HOGENOM" id="CLU_013181_2_2_7"/>
<dbReference type="Proteomes" id="UP000007073">
    <property type="component" value="Chromosome"/>
</dbReference>
<dbReference type="GO" id="GO:0005829">
    <property type="term" value="C:cytosol"/>
    <property type="evidence" value="ECO:0007669"/>
    <property type="project" value="TreeGrafter"/>
</dbReference>
<dbReference type="GO" id="GO:0051539">
    <property type="term" value="F:4 iron, 4 sulfur cluster binding"/>
    <property type="evidence" value="ECO:0007669"/>
    <property type="project" value="UniProtKB-KW"/>
</dbReference>
<dbReference type="GO" id="GO:0016829">
    <property type="term" value="F:lyase activity"/>
    <property type="evidence" value="ECO:0007669"/>
    <property type="project" value="UniProtKB-KW"/>
</dbReference>
<dbReference type="GO" id="GO:0046872">
    <property type="term" value="F:metal ion binding"/>
    <property type="evidence" value="ECO:0007669"/>
    <property type="project" value="UniProtKB-KW"/>
</dbReference>
<dbReference type="GO" id="GO:0009236">
    <property type="term" value="P:cobalamin biosynthetic process"/>
    <property type="evidence" value="ECO:0007669"/>
    <property type="project" value="UniProtKB-KW"/>
</dbReference>
<dbReference type="GO" id="GO:0009228">
    <property type="term" value="P:thiamine biosynthetic process"/>
    <property type="evidence" value="ECO:0007669"/>
    <property type="project" value="InterPro"/>
</dbReference>
<dbReference type="FunFam" id="3.20.20.540:FF:000001">
    <property type="entry name" value="Phosphomethylpyrimidine synthase"/>
    <property type="match status" value="1"/>
</dbReference>
<dbReference type="Gene3D" id="6.10.250.620">
    <property type="match status" value="1"/>
</dbReference>
<dbReference type="Gene3D" id="3.20.20.540">
    <property type="entry name" value="Radical SAM ThiC family, central domain"/>
    <property type="match status" value="1"/>
</dbReference>
<dbReference type="InterPro" id="IPR038521">
    <property type="entry name" value="ThiC/Bza_core_dom"/>
</dbReference>
<dbReference type="InterPro" id="IPR002817">
    <property type="entry name" value="ThiC/BzaA/B"/>
</dbReference>
<dbReference type="NCBIfam" id="NF009895">
    <property type="entry name" value="PRK13352.1"/>
    <property type="match status" value="1"/>
</dbReference>
<dbReference type="NCBIfam" id="TIGR00190">
    <property type="entry name" value="thiC"/>
    <property type="match status" value="1"/>
</dbReference>
<dbReference type="PANTHER" id="PTHR30557:SF1">
    <property type="entry name" value="PHOSPHOMETHYLPYRIMIDINE SYNTHASE, CHLOROPLASTIC"/>
    <property type="match status" value="1"/>
</dbReference>
<dbReference type="PANTHER" id="PTHR30557">
    <property type="entry name" value="THIAMINE BIOSYNTHESIS PROTEIN THIC"/>
    <property type="match status" value="1"/>
</dbReference>
<dbReference type="Pfam" id="PF01964">
    <property type="entry name" value="ThiC_Rad_SAM"/>
    <property type="match status" value="1"/>
</dbReference>
<dbReference type="SFLD" id="SFLDF00407">
    <property type="entry name" value="phosphomethylpyrimidine_syntha"/>
    <property type="match status" value="1"/>
</dbReference>
<dbReference type="SFLD" id="SFLDG01114">
    <property type="entry name" value="phosphomethylpyrimidine_syntha"/>
    <property type="match status" value="1"/>
</dbReference>
<dbReference type="SFLD" id="SFLDS00113">
    <property type="entry name" value="Radical_SAM_Phosphomethylpyrim"/>
    <property type="match status" value="1"/>
</dbReference>
<keyword id="KW-0004">4Fe-4S</keyword>
<keyword id="KW-0169">Cobalamin biosynthesis</keyword>
<keyword id="KW-0408">Iron</keyword>
<keyword id="KW-0411">Iron-sulfur</keyword>
<keyword id="KW-0456">Lyase</keyword>
<keyword id="KW-0479">Metal-binding</keyword>
<keyword id="KW-1185">Reference proteome</keyword>
<keyword id="KW-0949">S-adenosyl-L-methionine</keyword>
<keyword id="KW-0862">Zinc</keyword>
<sequence>MKTQIEIAREGTISSQMMAVAAEEHVSPDYVRQMVAEGKIVIPGNHSRKPRAVGIGKGLRTKVNASIGTSSDIIDYGAEVRKALAAQEAGADTLMELSVGGDLDRVRREVIAAVDLPVGNVPLYQAFCEAARKYGDPNKLDPEMLFDLIEKQCEDGMAFMAVHCGINLYTIERLKRQGYRYGGLVSKGGVSMVAWMMANRRENPLYEQFDRVTSILRKYDTVLSLGNGLRAGAIHDSSDRAQIQELLINCELAELGREMGCQMLVEGPGHVPLDEVEGNIQLQKRMSGGAPYYMLGPISTDVAPGFDHITAAIGAAQSSRYGADLICYITPAEHLALPNEEDVRQGVKAAKIAAYIGDMNKYPERGRERDKEMSKARRDLDWKKQFELALFPEDAKAIRASRTPEDEATCTMCGDFCASRGAGKLFAADLRGDKI</sequence>
<evidence type="ECO:0000250" key="1">
    <source>
        <dbReference type="UniProtKB" id="P61425"/>
    </source>
</evidence>
<evidence type="ECO:0000250" key="2">
    <source>
        <dbReference type="UniProtKB" id="Q9A6Q5"/>
    </source>
</evidence>
<evidence type="ECO:0000303" key="3">
    <source>
    </source>
</evidence>
<evidence type="ECO:0000305" key="4"/>
<evidence type="ECO:0000305" key="5">
    <source>
    </source>
</evidence>
<evidence type="ECO:0000312" key="6">
    <source>
        <dbReference type="EMBL" id="ABB30714.1"/>
    </source>
</evidence>
<name>BZAF_GEOMG</name>
<reference key="1">
    <citation type="journal article" date="2009" name="BMC Microbiol.">
        <title>The genome sequence of Geobacter metallireducens: features of metabolism, physiology and regulation common and dissimilar to Geobacter sulfurreducens.</title>
        <authorList>
            <person name="Aklujkar M."/>
            <person name="Krushkal J."/>
            <person name="DiBartolo G."/>
            <person name="Lapidus A."/>
            <person name="Land M.L."/>
            <person name="Lovley D.R."/>
        </authorList>
    </citation>
    <scope>NUCLEOTIDE SEQUENCE [LARGE SCALE GENOMIC DNA]</scope>
    <source>
        <strain>ATCC 53774 / DSM 7210 / GS-15</strain>
    </source>
</reference>
<reference key="2">
    <citation type="journal article" date="2015" name="Proc. Natl. Acad. Sci. U.S.A.">
        <title>Anaerobic biosynthesis of the lower ligand of vitamin B12.</title>
        <authorList>
            <person name="Hazra A.B."/>
            <person name="Han A.W."/>
            <person name="Mehta A.P."/>
            <person name="Mok K.C."/>
            <person name="Osadchiy V."/>
            <person name="Begley T.P."/>
            <person name="Taga M.E."/>
        </authorList>
    </citation>
    <scope>PREDICTED FUNCTION</scope>
</reference>
<accession>Q39YG0</accession>
<proteinExistence type="inferred from homology"/>
<feature type="chain" id="PRO_0000242265" description="5-hydroxybenzimidazole synthase">
    <location>
        <begin position="1"/>
        <end position="435"/>
    </location>
</feature>
<feature type="binding site" evidence="2">
    <location>
        <position position="95"/>
    </location>
    <ligand>
        <name>substrate</name>
    </ligand>
</feature>
<feature type="binding site" evidence="2">
    <location>
        <position position="124"/>
    </location>
    <ligand>
        <name>substrate</name>
    </ligand>
</feature>
<feature type="binding site" evidence="2">
    <location>
        <position position="163"/>
    </location>
    <ligand>
        <name>substrate</name>
    </ligand>
</feature>
<feature type="binding site" evidence="2">
    <location>
        <begin position="186"/>
        <end position="188"/>
    </location>
    <ligand>
        <name>substrate</name>
    </ligand>
</feature>
<feature type="binding site" evidence="2">
    <location>
        <begin position="227"/>
        <end position="230"/>
    </location>
    <ligand>
        <name>substrate</name>
    </ligand>
</feature>
<feature type="binding site" evidence="2">
    <location>
        <position position="266"/>
    </location>
    <ligand>
        <name>substrate</name>
    </ligand>
</feature>
<feature type="binding site" evidence="2">
    <location>
        <position position="270"/>
    </location>
    <ligand>
        <name>Zn(2+)</name>
        <dbReference type="ChEBI" id="CHEBI:29105"/>
    </ligand>
</feature>
<feature type="binding site" evidence="2">
    <location>
        <position position="293"/>
    </location>
    <ligand>
        <name>substrate</name>
    </ligand>
</feature>
<feature type="binding site" evidence="2">
    <location>
        <position position="334"/>
    </location>
    <ligand>
        <name>Zn(2+)</name>
        <dbReference type="ChEBI" id="CHEBI:29105"/>
    </ligand>
</feature>
<feature type="binding site" evidence="2">
    <location>
        <position position="410"/>
    </location>
    <ligand>
        <name>[4Fe-4S] cluster</name>
        <dbReference type="ChEBI" id="CHEBI:49883"/>
        <note>4Fe-4S-S-AdoMet</note>
    </ligand>
</feature>
<feature type="binding site" evidence="2">
    <location>
        <position position="413"/>
    </location>
    <ligand>
        <name>[4Fe-4S] cluster</name>
        <dbReference type="ChEBI" id="CHEBI:49883"/>
        <note>4Fe-4S-S-AdoMet</note>
    </ligand>
</feature>
<feature type="binding site" evidence="2">
    <location>
        <position position="417"/>
    </location>
    <ligand>
        <name>[4Fe-4S] cluster</name>
        <dbReference type="ChEBI" id="CHEBI:49883"/>
        <note>4Fe-4S-S-AdoMet</note>
    </ligand>
</feature>
<gene>
    <name evidence="3" type="primary">bzaF</name>
    <name evidence="6" type="synonym">thiC-2</name>
    <name type="ordered locus">Gmet_0471</name>
</gene>
<comment type="function">
    <text evidence="1 5">Catalyzes the conversion of aminoimidazole ribotide (AIR) to 5-hydroxybenzimidazole (5-HBI) in a radical S-adenosyl-L-methionine (SAM)-dependent reaction. Is thus involved in the anaerobic biosynthesis of the benzimidazole lower axial ligand of the cobamide produced by G.metallireducens.</text>
</comment>
<comment type="catalytic activity">
    <reaction evidence="1">
        <text>5-amino-1-(5-phospho-beta-D-ribosyl)imidazole + AH2 + S-adenosyl-L-methionine = 5-hydroxybenzimidazole + 5'-deoxyadenosine + formate + L-methionine + A + NH4(+) + phosphate + 2 H(+)</text>
        <dbReference type="Rhea" id="RHEA:53504"/>
        <dbReference type="ChEBI" id="CHEBI:13193"/>
        <dbReference type="ChEBI" id="CHEBI:15378"/>
        <dbReference type="ChEBI" id="CHEBI:15740"/>
        <dbReference type="ChEBI" id="CHEBI:17319"/>
        <dbReference type="ChEBI" id="CHEBI:17499"/>
        <dbReference type="ChEBI" id="CHEBI:28938"/>
        <dbReference type="ChEBI" id="CHEBI:43474"/>
        <dbReference type="ChEBI" id="CHEBI:57844"/>
        <dbReference type="ChEBI" id="CHEBI:59789"/>
        <dbReference type="ChEBI" id="CHEBI:137404"/>
        <dbReference type="ChEBI" id="CHEBI:137981"/>
        <dbReference type="EC" id="4.1.99.23"/>
    </reaction>
</comment>
<comment type="cofactor">
    <cofactor evidence="1">
        <name>[4Fe-4S] cluster</name>
        <dbReference type="ChEBI" id="CHEBI:49883"/>
    </cofactor>
    <text evidence="2">Binds 1 [4Fe-4S] cluster per subunit. The cluster is coordinated with 3 cysteines and an exchangeable S-adenosyl-L-methionine.</text>
</comment>
<comment type="subunit">
    <text evidence="1">Homodimer.</text>
</comment>
<comment type="similarity">
    <text evidence="4">Belongs to the ThiC family. 5-hydroxybenzimidazole synthase subfamily.</text>
</comment>
<organism>
    <name type="scientific">Geobacter metallireducens (strain ATCC 53774 / DSM 7210 / GS-15)</name>
    <dbReference type="NCBI Taxonomy" id="269799"/>
    <lineage>
        <taxon>Bacteria</taxon>
        <taxon>Pseudomonadati</taxon>
        <taxon>Thermodesulfobacteriota</taxon>
        <taxon>Desulfuromonadia</taxon>
        <taxon>Geobacterales</taxon>
        <taxon>Geobacteraceae</taxon>
        <taxon>Geobacter</taxon>
    </lineage>
</organism>
<protein>
    <recommendedName>
        <fullName evidence="1">5-hydroxybenzimidazole synthase</fullName>
        <shortName evidence="1">5-OHBza synthase</shortName>
        <shortName evidence="1">HBI synthase</shortName>
        <ecNumber evidence="1">4.1.99.23</ecNumber>
    </recommendedName>
</protein>